<proteinExistence type="inferred from homology"/>
<dbReference type="EMBL" id="CP000878">
    <property type="protein sequence ID" value="ABX08499.1"/>
    <property type="molecule type" value="Genomic_DNA"/>
</dbReference>
<dbReference type="RefSeq" id="WP_012195121.1">
    <property type="nucleotide sequence ID" value="NC_009976.1"/>
</dbReference>
<dbReference type="SMR" id="A9BEI9"/>
<dbReference type="STRING" id="93059.P9211_05681"/>
<dbReference type="KEGG" id="pmj:P9211_05681"/>
<dbReference type="eggNOG" id="COG0593">
    <property type="taxonomic scope" value="Bacteria"/>
</dbReference>
<dbReference type="HOGENOM" id="CLU_026910_3_1_3"/>
<dbReference type="OrthoDB" id="9807019at2"/>
<dbReference type="Proteomes" id="UP000000788">
    <property type="component" value="Chromosome"/>
</dbReference>
<dbReference type="GO" id="GO:0005737">
    <property type="term" value="C:cytoplasm"/>
    <property type="evidence" value="ECO:0007669"/>
    <property type="project" value="UniProtKB-SubCell"/>
</dbReference>
<dbReference type="GO" id="GO:0005886">
    <property type="term" value="C:plasma membrane"/>
    <property type="evidence" value="ECO:0007669"/>
    <property type="project" value="TreeGrafter"/>
</dbReference>
<dbReference type="GO" id="GO:0005524">
    <property type="term" value="F:ATP binding"/>
    <property type="evidence" value="ECO:0007669"/>
    <property type="project" value="UniProtKB-UniRule"/>
</dbReference>
<dbReference type="GO" id="GO:0016887">
    <property type="term" value="F:ATP hydrolysis activity"/>
    <property type="evidence" value="ECO:0007669"/>
    <property type="project" value="InterPro"/>
</dbReference>
<dbReference type="GO" id="GO:0003688">
    <property type="term" value="F:DNA replication origin binding"/>
    <property type="evidence" value="ECO:0007669"/>
    <property type="project" value="UniProtKB-UniRule"/>
</dbReference>
<dbReference type="GO" id="GO:0008289">
    <property type="term" value="F:lipid binding"/>
    <property type="evidence" value="ECO:0007669"/>
    <property type="project" value="UniProtKB-KW"/>
</dbReference>
<dbReference type="GO" id="GO:0006270">
    <property type="term" value="P:DNA replication initiation"/>
    <property type="evidence" value="ECO:0007669"/>
    <property type="project" value="UniProtKB-UniRule"/>
</dbReference>
<dbReference type="GO" id="GO:0006275">
    <property type="term" value="P:regulation of DNA replication"/>
    <property type="evidence" value="ECO:0007669"/>
    <property type="project" value="UniProtKB-UniRule"/>
</dbReference>
<dbReference type="CDD" id="cd00009">
    <property type="entry name" value="AAA"/>
    <property type="match status" value="1"/>
</dbReference>
<dbReference type="CDD" id="cd06571">
    <property type="entry name" value="Bac_DnaA_C"/>
    <property type="match status" value="1"/>
</dbReference>
<dbReference type="FunFam" id="3.40.50.300:FF:000668">
    <property type="entry name" value="Chromosomal replication initiator protein DnaA"/>
    <property type="match status" value="1"/>
</dbReference>
<dbReference type="Gene3D" id="1.10.1750.10">
    <property type="match status" value="1"/>
</dbReference>
<dbReference type="Gene3D" id="1.10.8.60">
    <property type="match status" value="1"/>
</dbReference>
<dbReference type="Gene3D" id="3.30.300.180">
    <property type="match status" value="1"/>
</dbReference>
<dbReference type="Gene3D" id="3.40.50.300">
    <property type="entry name" value="P-loop containing nucleotide triphosphate hydrolases"/>
    <property type="match status" value="1"/>
</dbReference>
<dbReference type="HAMAP" id="MF_00377">
    <property type="entry name" value="DnaA_bact"/>
    <property type="match status" value="1"/>
</dbReference>
<dbReference type="InterPro" id="IPR003593">
    <property type="entry name" value="AAA+_ATPase"/>
</dbReference>
<dbReference type="InterPro" id="IPR001957">
    <property type="entry name" value="Chromosome_initiator_DnaA"/>
</dbReference>
<dbReference type="InterPro" id="IPR020591">
    <property type="entry name" value="Chromosome_initiator_DnaA-like"/>
</dbReference>
<dbReference type="InterPro" id="IPR018312">
    <property type="entry name" value="Chromosome_initiator_DnaA_CS"/>
</dbReference>
<dbReference type="InterPro" id="IPR013159">
    <property type="entry name" value="DnaA_C"/>
</dbReference>
<dbReference type="InterPro" id="IPR013317">
    <property type="entry name" value="DnaA_dom"/>
</dbReference>
<dbReference type="InterPro" id="IPR024633">
    <property type="entry name" value="DnaA_N_dom"/>
</dbReference>
<dbReference type="InterPro" id="IPR038454">
    <property type="entry name" value="DnaA_N_sf"/>
</dbReference>
<dbReference type="InterPro" id="IPR027417">
    <property type="entry name" value="P-loop_NTPase"/>
</dbReference>
<dbReference type="InterPro" id="IPR010921">
    <property type="entry name" value="Trp_repressor/repl_initiator"/>
</dbReference>
<dbReference type="NCBIfam" id="TIGR00362">
    <property type="entry name" value="DnaA"/>
    <property type="match status" value="1"/>
</dbReference>
<dbReference type="PANTHER" id="PTHR30050">
    <property type="entry name" value="CHROMOSOMAL REPLICATION INITIATOR PROTEIN DNAA"/>
    <property type="match status" value="1"/>
</dbReference>
<dbReference type="PANTHER" id="PTHR30050:SF2">
    <property type="entry name" value="CHROMOSOMAL REPLICATION INITIATOR PROTEIN DNAA"/>
    <property type="match status" value="1"/>
</dbReference>
<dbReference type="Pfam" id="PF00308">
    <property type="entry name" value="Bac_DnaA"/>
    <property type="match status" value="1"/>
</dbReference>
<dbReference type="Pfam" id="PF08299">
    <property type="entry name" value="Bac_DnaA_C"/>
    <property type="match status" value="1"/>
</dbReference>
<dbReference type="Pfam" id="PF11638">
    <property type="entry name" value="DnaA_N"/>
    <property type="match status" value="1"/>
</dbReference>
<dbReference type="PRINTS" id="PR00051">
    <property type="entry name" value="DNAA"/>
</dbReference>
<dbReference type="SMART" id="SM00382">
    <property type="entry name" value="AAA"/>
    <property type="match status" value="1"/>
</dbReference>
<dbReference type="SMART" id="SM00760">
    <property type="entry name" value="Bac_DnaA_C"/>
    <property type="match status" value="1"/>
</dbReference>
<dbReference type="SUPFAM" id="SSF52540">
    <property type="entry name" value="P-loop containing nucleoside triphosphate hydrolases"/>
    <property type="match status" value="1"/>
</dbReference>
<dbReference type="SUPFAM" id="SSF48295">
    <property type="entry name" value="TrpR-like"/>
    <property type="match status" value="1"/>
</dbReference>
<dbReference type="PROSITE" id="PS01008">
    <property type="entry name" value="DNAA"/>
    <property type="match status" value="1"/>
</dbReference>
<name>DNAA_PROM4</name>
<sequence length="454" mass="50639">MLTGNEVWVKVQQSLRGNLSKPSYETWISPTTFCNFERGELTLLAANDFSSAWLTNNYSRAIEEAAEAVIGESVKVIVKVKDDIQKSEASLPPRISIPAFHPPGDSKKTDSKPALNLRYVFNRFVVGPNSRIAHAAAMSVAEAPAKEFNPLFICGGVGLGKTHLMQAIGHYRLEIDPGAKVSYVSTETFTNDLIVAIRQDGMQSFRDKYRAADLILVDDIQFLEGKEYTQEEFFHTFNALHESGTQIVLASDRPPNQIPRLQERLISRFSMGLIADVQAPDLETRMAILQKKAEQDRVRLPRDLIQFIAGRFTLNIRELEGALTRAVAFASITGLPMTVESIAPMLDPNGQGVEVTPKQVMEKVSEVFAVTSDEMCSSSRRRPVSQARQVGMYLMRHGTDLSLPRIGEVFGGKDHTTVMYAIEQIEKKLSTDPQLASQVQKVKDLLQIDSRRKR</sequence>
<accession>A9BEI9</accession>
<comment type="function">
    <text evidence="1">Plays an essential role in the initiation and regulation of chromosomal replication. ATP-DnaA binds to the origin of replication (oriC) to initiate formation of the DNA replication initiation complex once per cell cycle. Binds the DnaA box (a 9 base pair repeat at the origin) and separates the double-stranded (ds)DNA. Forms a right-handed helical filament on oriC DNA; dsDNA binds to the exterior of the filament while single-stranded (ss)DNA is stabiized in the filament's interior. The ATP-DnaA-oriC complex binds and stabilizes one strand of the AT-rich DNA unwinding element (DUE), permitting loading of DNA polymerase. After initiation quickly degrades to an ADP-DnaA complex that is not apt for DNA replication. Binds acidic phospholipids.</text>
</comment>
<comment type="subunit">
    <text evidence="1">Oligomerizes as a right-handed, spiral filament on DNA at oriC.</text>
</comment>
<comment type="subcellular location">
    <subcellularLocation>
        <location evidence="1">Cytoplasm</location>
    </subcellularLocation>
</comment>
<comment type="domain">
    <text evidence="1">Domain I is involved in oligomerization and binding regulators, domain II is flexibile and of varying length in different bacteria, domain III forms the AAA+ region, while domain IV binds dsDNA.</text>
</comment>
<comment type="similarity">
    <text evidence="1">Belongs to the DnaA family.</text>
</comment>
<evidence type="ECO:0000255" key="1">
    <source>
        <dbReference type="HAMAP-Rule" id="MF_00377"/>
    </source>
</evidence>
<protein>
    <recommendedName>
        <fullName evidence="1">Chromosomal replication initiator protein DnaA</fullName>
    </recommendedName>
</protein>
<organism>
    <name type="scientific">Prochlorococcus marinus (strain MIT 9211)</name>
    <dbReference type="NCBI Taxonomy" id="93059"/>
    <lineage>
        <taxon>Bacteria</taxon>
        <taxon>Bacillati</taxon>
        <taxon>Cyanobacteriota</taxon>
        <taxon>Cyanophyceae</taxon>
        <taxon>Synechococcales</taxon>
        <taxon>Prochlorococcaceae</taxon>
        <taxon>Prochlorococcus</taxon>
    </lineage>
</organism>
<gene>
    <name evidence="1" type="primary">dnaA</name>
    <name type="ordered locus">P9211_05681</name>
</gene>
<feature type="chain" id="PRO_1000122002" description="Chromosomal replication initiator protein DnaA">
    <location>
        <begin position="1"/>
        <end position="454"/>
    </location>
</feature>
<feature type="region of interest" description="Domain I, interacts with DnaA modulators" evidence="1">
    <location>
        <begin position="1"/>
        <end position="84"/>
    </location>
</feature>
<feature type="region of interest" description="Domain II" evidence="1">
    <location>
        <begin position="84"/>
        <end position="113"/>
    </location>
</feature>
<feature type="region of interest" description="Domain III, AAA+ region" evidence="1">
    <location>
        <begin position="114"/>
        <end position="330"/>
    </location>
</feature>
<feature type="region of interest" description="Domain IV, binds dsDNA" evidence="1">
    <location>
        <begin position="331"/>
        <end position="454"/>
    </location>
</feature>
<feature type="binding site" evidence="1">
    <location>
        <position position="158"/>
    </location>
    <ligand>
        <name>ATP</name>
        <dbReference type="ChEBI" id="CHEBI:30616"/>
    </ligand>
</feature>
<feature type="binding site" evidence="1">
    <location>
        <position position="160"/>
    </location>
    <ligand>
        <name>ATP</name>
        <dbReference type="ChEBI" id="CHEBI:30616"/>
    </ligand>
</feature>
<feature type="binding site" evidence="1">
    <location>
        <position position="161"/>
    </location>
    <ligand>
        <name>ATP</name>
        <dbReference type="ChEBI" id="CHEBI:30616"/>
    </ligand>
</feature>
<feature type="binding site" evidence="1">
    <location>
        <position position="162"/>
    </location>
    <ligand>
        <name>ATP</name>
        <dbReference type="ChEBI" id="CHEBI:30616"/>
    </ligand>
</feature>
<keyword id="KW-0067">ATP-binding</keyword>
<keyword id="KW-0963">Cytoplasm</keyword>
<keyword id="KW-0235">DNA replication</keyword>
<keyword id="KW-0238">DNA-binding</keyword>
<keyword id="KW-0446">Lipid-binding</keyword>
<keyword id="KW-0547">Nucleotide-binding</keyword>
<keyword id="KW-1185">Reference proteome</keyword>
<reference key="1">
    <citation type="journal article" date="2007" name="PLoS Genet.">
        <title>Patterns and implications of gene gain and loss in the evolution of Prochlorococcus.</title>
        <authorList>
            <person name="Kettler G.C."/>
            <person name="Martiny A.C."/>
            <person name="Huang K."/>
            <person name="Zucker J."/>
            <person name="Coleman M.L."/>
            <person name="Rodrigue S."/>
            <person name="Chen F."/>
            <person name="Lapidus A."/>
            <person name="Ferriera S."/>
            <person name="Johnson J."/>
            <person name="Steglich C."/>
            <person name="Church G.M."/>
            <person name="Richardson P."/>
            <person name="Chisholm S.W."/>
        </authorList>
    </citation>
    <scope>NUCLEOTIDE SEQUENCE [LARGE SCALE GENOMIC DNA]</scope>
    <source>
        <strain>MIT 9211</strain>
    </source>
</reference>